<gene>
    <name type="primary">CD80</name>
</gene>
<reference key="1">
    <citation type="journal article" date="1995" name="Immunogenetics">
        <title>Cloning and sequencing of the rabbit gene encoding T-cell costimulatory molecules.</title>
        <authorList>
            <person name="Isono T."/>
            <person name="Seto A."/>
        </authorList>
    </citation>
    <scope>NUCLEOTIDE SEQUENCE [MRNA]</scope>
    <source>
        <strain>B/J X Chbb:HM</strain>
    </source>
</reference>
<proteinExistence type="evidence at transcript level"/>
<sequence length="299" mass="33514">MGHTLRPGTPLPRCLHLKLCLLLALAGLHFSSGISQVTKSVKEMAALSCDYNISIDELARMRIYWQKDQQMVLSIISGQVEVWPEYKNRTFPDIINNLSLMILALRLSDKGTYTCVVQKNENGSFRREHLTSVTLSIRADFPVPSITDIGHPDPNVKRIRCSASGGFPEPRLAWMEDGEELNAVNTTVDQDLDTELYSVSSELDFNVTNNHSIVCLIKYGELSVSQIFPWSKPKQEPPIDQLPFWVIIPVSGALVLTAVVLYCLACRHVARWKRTRRNEETVGTERLSPIYLGSAQSSG</sequence>
<organism>
    <name type="scientific">Oryctolagus cuniculus</name>
    <name type="common">Rabbit</name>
    <dbReference type="NCBI Taxonomy" id="9986"/>
    <lineage>
        <taxon>Eukaryota</taxon>
        <taxon>Metazoa</taxon>
        <taxon>Chordata</taxon>
        <taxon>Craniata</taxon>
        <taxon>Vertebrata</taxon>
        <taxon>Euteleostomi</taxon>
        <taxon>Mammalia</taxon>
        <taxon>Eutheria</taxon>
        <taxon>Euarchontoglires</taxon>
        <taxon>Glires</taxon>
        <taxon>Lagomorpha</taxon>
        <taxon>Leporidae</taxon>
        <taxon>Oryctolagus</taxon>
    </lineage>
</organism>
<dbReference type="EMBL" id="D49843">
    <property type="protein sequence ID" value="BAA08643.1"/>
    <property type="molecule type" value="mRNA"/>
</dbReference>
<dbReference type="PIR" id="I46690">
    <property type="entry name" value="I46690"/>
</dbReference>
<dbReference type="RefSeq" id="NP_001076132.1">
    <property type="nucleotide sequence ID" value="NM_001082663.1"/>
</dbReference>
<dbReference type="SMR" id="P42070"/>
<dbReference type="FunCoup" id="P42070">
    <property type="interactions" value="15"/>
</dbReference>
<dbReference type="STRING" id="9986.ENSOCUP00000008197"/>
<dbReference type="GlyCosmos" id="P42070">
    <property type="glycosylation" value="7 sites, No reported glycans"/>
</dbReference>
<dbReference type="PaxDb" id="9986-ENSOCUP00000008197"/>
<dbReference type="GeneID" id="100009377"/>
<dbReference type="KEGG" id="ocu:100009377"/>
<dbReference type="CTD" id="941"/>
<dbReference type="eggNOG" id="ENOG502S5B5">
    <property type="taxonomic scope" value="Eukaryota"/>
</dbReference>
<dbReference type="InParanoid" id="P42070"/>
<dbReference type="OrthoDB" id="9904387at2759"/>
<dbReference type="Proteomes" id="UP000001811">
    <property type="component" value="Unplaced"/>
</dbReference>
<dbReference type="GO" id="GO:0009897">
    <property type="term" value="C:external side of plasma membrane"/>
    <property type="evidence" value="ECO:0007669"/>
    <property type="project" value="TreeGrafter"/>
</dbReference>
<dbReference type="GO" id="GO:0015026">
    <property type="term" value="F:coreceptor activity"/>
    <property type="evidence" value="ECO:0007669"/>
    <property type="project" value="InterPro"/>
</dbReference>
<dbReference type="GO" id="GO:0007166">
    <property type="term" value="P:cell surface receptor signaling pathway"/>
    <property type="evidence" value="ECO:0007669"/>
    <property type="project" value="TreeGrafter"/>
</dbReference>
<dbReference type="GO" id="GO:0071222">
    <property type="term" value="P:cellular response to lipopolysaccharide"/>
    <property type="evidence" value="ECO:0007669"/>
    <property type="project" value="TreeGrafter"/>
</dbReference>
<dbReference type="GO" id="GO:0006955">
    <property type="term" value="P:immune response"/>
    <property type="evidence" value="ECO:0007669"/>
    <property type="project" value="TreeGrafter"/>
</dbReference>
<dbReference type="GO" id="GO:0042130">
    <property type="term" value="P:negative regulation of T cell proliferation"/>
    <property type="evidence" value="ECO:0007669"/>
    <property type="project" value="TreeGrafter"/>
</dbReference>
<dbReference type="GO" id="GO:0042102">
    <property type="term" value="P:positive regulation of T cell proliferation"/>
    <property type="evidence" value="ECO:0007669"/>
    <property type="project" value="TreeGrafter"/>
</dbReference>
<dbReference type="GO" id="GO:0031295">
    <property type="term" value="P:T cell costimulation"/>
    <property type="evidence" value="ECO:0007669"/>
    <property type="project" value="InterPro"/>
</dbReference>
<dbReference type="CDD" id="cd16083">
    <property type="entry name" value="IgC1_CD80"/>
    <property type="match status" value="1"/>
</dbReference>
<dbReference type="CDD" id="cd16086">
    <property type="entry name" value="IgV_CD80"/>
    <property type="match status" value="1"/>
</dbReference>
<dbReference type="FunFam" id="2.60.40.10:FF:000910">
    <property type="entry name" value="T-lymphocyte activation antigen CD80"/>
    <property type="match status" value="1"/>
</dbReference>
<dbReference type="FunFam" id="2.60.40.10:FF:001077">
    <property type="entry name" value="T-lymphocyte activation antigen CD80"/>
    <property type="match status" value="1"/>
</dbReference>
<dbReference type="Gene3D" id="2.60.40.10">
    <property type="entry name" value="Immunoglobulins"/>
    <property type="match status" value="2"/>
</dbReference>
<dbReference type="InterPro" id="IPR013162">
    <property type="entry name" value="CD80_C2-set"/>
</dbReference>
<dbReference type="InterPro" id="IPR037676">
    <property type="entry name" value="CD80_IgC"/>
</dbReference>
<dbReference type="InterPro" id="IPR042711">
    <property type="entry name" value="CD80_IgV"/>
</dbReference>
<dbReference type="InterPro" id="IPR007110">
    <property type="entry name" value="Ig-like_dom"/>
</dbReference>
<dbReference type="InterPro" id="IPR036179">
    <property type="entry name" value="Ig-like_dom_sf"/>
</dbReference>
<dbReference type="InterPro" id="IPR013783">
    <property type="entry name" value="Ig-like_fold"/>
</dbReference>
<dbReference type="InterPro" id="IPR003599">
    <property type="entry name" value="Ig_sub"/>
</dbReference>
<dbReference type="InterPro" id="IPR013106">
    <property type="entry name" value="Ig_V-set"/>
</dbReference>
<dbReference type="InterPro" id="IPR051713">
    <property type="entry name" value="T-cell_Activation_Regulation"/>
</dbReference>
<dbReference type="PANTHER" id="PTHR25466">
    <property type="entry name" value="T-LYMPHOCYTE ACTIVATION ANTIGEN"/>
    <property type="match status" value="1"/>
</dbReference>
<dbReference type="PANTHER" id="PTHR25466:SF4">
    <property type="entry name" value="T-LYMPHOCYTE ACTIVATION ANTIGEN CD80"/>
    <property type="match status" value="1"/>
</dbReference>
<dbReference type="Pfam" id="PF08205">
    <property type="entry name" value="C2-set_2"/>
    <property type="match status" value="1"/>
</dbReference>
<dbReference type="Pfam" id="PF07686">
    <property type="entry name" value="V-set"/>
    <property type="match status" value="1"/>
</dbReference>
<dbReference type="SMART" id="SM00409">
    <property type="entry name" value="IG"/>
    <property type="match status" value="1"/>
</dbReference>
<dbReference type="SUPFAM" id="SSF48726">
    <property type="entry name" value="Immunoglobulin"/>
    <property type="match status" value="2"/>
</dbReference>
<dbReference type="PROSITE" id="PS50835">
    <property type="entry name" value="IG_LIKE"/>
    <property type="match status" value="2"/>
</dbReference>
<name>CD80_RABIT</name>
<accession>P42070</accession>
<comment type="function">
    <text evidence="1 2">Costimulatory molecule that belongs to the immunoglobulin superfamily that plays an important role in T-lymphocyte activation. Acts as the primary auxiliary signal augmenting the MHC/TCR signal in naive T-cells together with the CD28 receptor which is constitutively expressed on the cell surface of T-cells. In turn, activates different signaling pathways such as NF-kappa-B or MAPK leading to the production of different cytokines. In addition, CD28/CD80 costimulatory signal stimulates glucose metabolism and ATP synthesis of T-cells by activating the PI3K/Akt signaling pathway. Also acts as a regulator of PDL1/PDCD1 interactions to limit excess engagement of PDL1 and its inhibitory role in immune responses. Expressed on B-cells, plays a critical role in regulating interactions between B-cells and T-cells in both early and late germinal center responses, which are crucial for the generation of effective humoral immune responses.</text>
</comment>
<comment type="subunit">
    <text evidence="1">Homodimer. Interacts with CTLA4; this interaction inhibits T-cell activation. Interacts with PDL1/CD274; this interaction blocks PDL1/PDCD1 binding and thus PDL1/CD274 inhibitory function. Interacts with CD28.</text>
</comment>
<comment type="subcellular location">
    <subcellularLocation>
        <location evidence="1">Cell membrane</location>
        <topology evidence="1">Single-pass type I membrane protein</topology>
    </subcellularLocation>
</comment>
<keyword id="KW-1003">Cell membrane</keyword>
<keyword id="KW-1015">Disulfide bond</keyword>
<keyword id="KW-0325">Glycoprotein</keyword>
<keyword id="KW-0393">Immunoglobulin domain</keyword>
<keyword id="KW-0472">Membrane</keyword>
<keyword id="KW-0675">Receptor</keyword>
<keyword id="KW-1185">Reference proteome</keyword>
<keyword id="KW-0732">Signal</keyword>
<keyword id="KW-0812">Transmembrane</keyword>
<keyword id="KW-1133">Transmembrane helix</keyword>
<feature type="signal peptide" evidence="3">
    <location>
        <begin position="1"/>
        <end position="32"/>
    </location>
</feature>
<feature type="chain" id="PRO_0000014549" description="T-lymphocyte activation antigen CD80">
    <location>
        <begin position="33"/>
        <end position="299"/>
    </location>
</feature>
<feature type="topological domain" description="Extracellular" evidence="3">
    <location>
        <begin position="33"/>
        <end position="243"/>
    </location>
</feature>
<feature type="transmembrane region" description="Helical" evidence="3">
    <location>
        <begin position="244"/>
        <end position="264"/>
    </location>
</feature>
<feature type="topological domain" description="Cytoplasmic" evidence="3">
    <location>
        <begin position="265"/>
        <end position="299"/>
    </location>
</feature>
<feature type="domain" description="Ig-like V-type">
    <location>
        <begin position="33"/>
        <end position="131"/>
    </location>
</feature>
<feature type="domain" description="Ig-like C2-type">
    <location>
        <begin position="144"/>
        <end position="225"/>
    </location>
</feature>
<feature type="glycosylation site" description="N-linked (GlcNAc...) asparagine" evidence="3">
    <location>
        <position position="52"/>
    </location>
</feature>
<feature type="glycosylation site" description="N-linked (GlcNAc...) asparagine" evidence="3">
    <location>
        <position position="88"/>
    </location>
</feature>
<feature type="glycosylation site" description="N-linked (GlcNAc...) asparagine" evidence="3">
    <location>
        <position position="97"/>
    </location>
</feature>
<feature type="glycosylation site" description="N-linked (GlcNAc...) asparagine" evidence="3">
    <location>
        <position position="122"/>
    </location>
</feature>
<feature type="glycosylation site" description="N-linked (GlcNAc...) asparagine" evidence="3">
    <location>
        <position position="185"/>
    </location>
</feature>
<feature type="glycosylation site" description="N-linked (GlcNAc...) asparagine" evidence="3">
    <location>
        <position position="206"/>
    </location>
</feature>
<feature type="glycosylation site" description="N-linked (GlcNAc...) asparagine" evidence="3">
    <location>
        <position position="210"/>
    </location>
</feature>
<feature type="disulfide bond" evidence="4">
    <location>
        <begin position="49"/>
        <end position="115"/>
    </location>
</feature>
<feature type="disulfide bond" evidence="4">
    <location>
        <begin position="161"/>
        <end position="215"/>
    </location>
</feature>
<protein>
    <recommendedName>
        <fullName>T-lymphocyte activation antigen CD80</fullName>
    </recommendedName>
    <alternativeName>
        <fullName>Activation B7-1 antigen</fullName>
    </alternativeName>
    <cdAntigenName>CD80</cdAntigenName>
</protein>
<evidence type="ECO:0000250" key="1">
    <source>
        <dbReference type="UniProtKB" id="P33681"/>
    </source>
</evidence>
<evidence type="ECO:0000250" key="2">
    <source>
        <dbReference type="UniProtKB" id="Q00609"/>
    </source>
</evidence>
<evidence type="ECO:0000255" key="3"/>
<evidence type="ECO:0000255" key="4">
    <source>
        <dbReference type="PROSITE-ProRule" id="PRU00114"/>
    </source>
</evidence>